<accession>O68503</accession>
<sequence length="192" mass="20515">MSDKPNAVSSHTTPDVPEVAATPELSTGICAGDYRAALRRHPAGVTVVTLDSGTGPVGFTATSFSSVSLEPPLVSFNIAETSSSINALKAAESLVIHLLGEHQQHLAQRFARSADQRFADESLWAVLDTGEPVLHGTPSWMRVKVDQLIPVGDHTLVIGLVTRVHAEEDDESAAAPLLYHEGKYYRPTPLGQ</sequence>
<organism>
    <name type="scientific">Rhodococcus qingshengii</name>
    <dbReference type="NCBI Taxonomy" id="334542"/>
    <lineage>
        <taxon>Bacteria</taxon>
        <taxon>Bacillati</taxon>
        <taxon>Actinomycetota</taxon>
        <taxon>Actinomycetes</taxon>
        <taxon>Mycobacteriales</taxon>
        <taxon>Nocardiaceae</taxon>
        <taxon>Rhodococcus</taxon>
        <taxon>Rhodococcus erythropolis group</taxon>
    </lineage>
</organism>
<reference key="1">
    <citation type="submission" date="1998-02" db="EMBL/GenBank/DDBJ databases">
        <title>Cloning of the dszD gene, encoding the NADH-FMN oxidoreductase required for the activity of the dibenzothiophene and dibenzothiophene-sulfone monooxygenases of Rhodococcus erythropolis strain IGTS8.</title>
        <authorList>
            <person name="Childs J.D."/>
            <person name="Li M.Z."/>
            <person name="Mitchell K."/>
            <person name="Emanule J."/>
            <person name="Gray K.A."/>
            <person name="Squires C.H."/>
        </authorList>
    </citation>
    <scope>NUCLEOTIDE SEQUENCE [GENOMIC DNA]</scope>
    <source>
        <strain>ATCC 53968 / IGTS8</strain>
    </source>
</reference>
<reference key="2">
    <citation type="journal article" date="1996" name="Nat. Biotechnol.">
        <title>Molecular mechanisms of biocatalytic desulfurization of fossil fuels.</title>
        <authorList>
            <person name="Gray K.A."/>
            <person name="Pogrebinsky O.S."/>
            <person name="Mrachko G.T."/>
            <person name="Xi L."/>
            <person name="Monticello D.J."/>
            <person name="Squires C.H."/>
        </authorList>
    </citation>
    <scope>PROTEIN SEQUENCE OF 2-41</scope>
    <scope>FUNCTION</scope>
    <scope>CATALYTIC ACTIVITY</scope>
    <scope>PATHWAY</scope>
    <source>
        <strain>ATCC 53968 / IGTS8</strain>
    </source>
</reference>
<reference key="3">
    <citation type="journal article" date="2002" name="Appl. Environ. Microbiol.">
        <title>Chemostat approach for the directed evolution of biodesulfurization gain-of-function mutants.</title>
        <authorList>
            <person name="Arensdorf J.J."/>
            <person name="Loomis A.K."/>
            <person name="DiGrazia P.M."/>
            <person name="Monticello D.J."/>
            <person name="Pienkos P.T."/>
        </authorList>
    </citation>
    <scope>FUNCTION</scope>
    <scope>PATHWAY</scope>
    <scope>BIOTECHNOLOGY</scope>
    <source>
        <strain>ATCC 53968 / IGTS8</strain>
    </source>
</reference>
<reference key="4">
    <citation type="journal article" date="2010" name="Biotechnol. Lett.">
        <title>Site-directed mutagenesis enhances the activity of NADH-FMN oxidoreductase (DszD) activity of Rhodococcus erythropolis.</title>
        <authorList>
            <person name="Kamali N."/>
            <person name="Tavallaie M."/>
            <person name="Bambai B."/>
            <person name="Karkhane A.A."/>
            <person name="Miri M."/>
        </authorList>
    </citation>
    <scope>FUNCTION</scope>
    <scope>CATALYTIC ACTIVITY</scope>
    <scope>BIOTECHNOLOGY</scope>
    <scope>MUTAGENESIS OF THR-62</scope>
    <source>
        <strain>ATCC 53968 / IGTS8</strain>
    </source>
</reference>
<protein>
    <recommendedName>
        <fullName evidence="6">NADH:FMN oxidoreductase</fullName>
        <ecNumber evidence="5">1.5.1.42</ecNumber>
    </recommendedName>
    <alternativeName>
        <fullName evidence="6">FMN reductase</fullName>
    </alternativeName>
    <alternativeName>
        <fullName evidence="6">Flavin reductase</fullName>
    </alternativeName>
</protein>
<gene>
    <name evidence="6" type="primary">dszD</name>
</gene>
<evidence type="ECO:0000250" key="1">
    <source>
        <dbReference type="UniProtKB" id="B6CDL6"/>
    </source>
</evidence>
<evidence type="ECO:0000256" key="2">
    <source>
        <dbReference type="SAM" id="MobiDB-lite"/>
    </source>
</evidence>
<evidence type="ECO:0000269" key="3">
    <source>
    </source>
</evidence>
<evidence type="ECO:0000269" key="4">
    <source>
    </source>
</evidence>
<evidence type="ECO:0000269" key="5">
    <source>
    </source>
</evidence>
<evidence type="ECO:0000303" key="6">
    <source>
    </source>
</evidence>
<evidence type="ECO:0000305" key="7"/>
<dbReference type="EC" id="1.5.1.42" evidence="5"/>
<dbReference type="EMBL" id="AF048979">
    <property type="protein sequence ID" value="AAC38226.1"/>
    <property type="molecule type" value="Genomic_DNA"/>
</dbReference>
<dbReference type="RefSeq" id="WP_003941189.1">
    <property type="nucleotide sequence ID" value="NZ_SSWN01000017.1"/>
</dbReference>
<dbReference type="SMR" id="O68503"/>
<dbReference type="GeneID" id="64138614"/>
<dbReference type="BioCyc" id="MetaCyc:MONOMER-20854"/>
<dbReference type="UniPathway" id="UPA00346"/>
<dbReference type="GO" id="GO:0005737">
    <property type="term" value="C:cytoplasm"/>
    <property type="evidence" value="ECO:0007669"/>
    <property type="project" value="UniProtKB-SubCell"/>
</dbReference>
<dbReference type="GO" id="GO:0010181">
    <property type="term" value="F:FMN binding"/>
    <property type="evidence" value="ECO:0007669"/>
    <property type="project" value="InterPro"/>
</dbReference>
<dbReference type="GO" id="GO:0042602">
    <property type="term" value="F:riboflavin reductase (NADPH) activity"/>
    <property type="evidence" value="ECO:0007669"/>
    <property type="project" value="TreeGrafter"/>
</dbReference>
<dbReference type="GO" id="GO:0018896">
    <property type="term" value="P:dibenzothiophene catabolic process"/>
    <property type="evidence" value="ECO:0007669"/>
    <property type="project" value="UniProtKB-UniPathway"/>
</dbReference>
<dbReference type="GO" id="GO:0006208">
    <property type="term" value="P:pyrimidine nucleobase catabolic process"/>
    <property type="evidence" value="ECO:0007669"/>
    <property type="project" value="TreeGrafter"/>
</dbReference>
<dbReference type="Gene3D" id="2.30.110.10">
    <property type="entry name" value="Electron Transport, Fmn-binding Protein, Chain A"/>
    <property type="match status" value="1"/>
</dbReference>
<dbReference type="InterPro" id="IPR002563">
    <property type="entry name" value="Flavin_Rdtase-like_dom"/>
</dbReference>
<dbReference type="InterPro" id="IPR050268">
    <property type="entry name" value="NADH-dep_flavin_reductase"/>
</dbReference>
<dbReference type="InterPro" id="IPR012349">
    <property type="entry name" value="Split_barrel_FMN-bd"/>
</dbReference>
<dbReference type="PANTHER" id="PTHR30466">
    <property type="entry name" value="FLAVIN REDUCTASE"/>
    <property type="match status" value="1"/>
</dbReference>
<dbReference type="PANTHER" id="PTHR30466:SF1">
    <property type="entry name" value="FMN REDUCTASE (NADH) RUTF"/>
    <property type="match status" value="1"/>
</dbReference>
<dbReference type="Pfam" id="PF01613">
    <property type="entry name" value="Flavin_Reduct"/>
    <property type="match status" value="1"/>
</dbReference>
<dbReference type="SMART" id="SM00903">
    <property type="entry name" value="Flavin_Reduct"/>
    <property type="match status" value="1"/>
</dbReference>
<dbReference type="SUPFAM" id="SSF50475">
    <property type="entry name" value="FMN-binding split barrel"/>
    <property type="match status" value="1"/>
</dbReference>
<feature type="initiator methionine" description="Removed" evidence="5">
    <location>
        <position position="1"/>
    </location>
</feature>
<feature type="chain" id="PRO_0000455401" description="NADH:FMN oxidoreductase">
    <location>
        <begin position="2"/>
        <end position="192"/>
    </location>
</feature>
<feature type="region of interest" description="Disordered" evidence="2">
    <location>
        <begin position="1"/>
        <end position="20"/>
    </location>
</feature>
<feature type="binding site" evidence="1">
    <location>
        <begin position="60"/>
        <end position="63"/>
    </location>
    <ligand>
        <name>FMN</name>
        <dbReference type="ChEBI" id="CHEBI:58210"/>
    </ligand>
</feature>
<feature type="binding site" evidence="1">
    <location>
        <begin position="77"/>
        <end position="84"/>
    </location>
    <ligand>
        <name>FMN</name>
        <dbReference type="ChEBI" id="CHEBI:58210"/>
    </ligand>
</feature>
<feature type="binding site" evidence="1">
    <location>
        <position position="111"/>
    </location>
    <ligand>
        <name>FMN</name>
        <dbReference type="ChEBI" id="CHEBI:58210"/>
    </ligand>
</feature>
<feature type="binding site" evidence="1">
    <location>
        <position position="117"/>
    </location>
    <ligand>
        <name>FMN</name>
        <dbReference type="ChEBI" id="CHEBI:58210"/>
    </ligand>
</feature>
<feature type="mutagenesis site" description="Flavin reductase activity increases 7-fold." evidence="4">
    <original>T</original>
    <variation>A</variation>
    <location>
        <position position="62"/>
    </location>
</feature>
<feature type="mutagenesis site" description="Flavin reductase activity increases 5-fold." evidence="4">
    <original>T</original>
    <variation>N</variation>
    <location>
        <position position="62"/>
    </location>
</feature>
<name>DSZD_RHOSG</name>
<keyword id="KW-0963">Cytoplasm</keyword>
<keyword id="KW-0903">Direct protein sequencing</keyword>
<keyword id="KW-0285">Flavoprotein</keyword>
<keyword id="KW-0288">FMN</keyword>
<keyword id="KW-0547">Nucleotide-binding</keyword>
<keyword id="KW-0560">Oxidoreductase</keyword>
<proteinExistence type="evidence at protein level"/>
<comment type="function">
    <text evidence="3 4 5">An NADH:FMN oxidoreductase which supplies reduced FMN for the '4S' desulfurization pathway that removes covalently bound sulfur from dibenzothiophene (DBT) without breaking carbon-carbon bonds (PubMed:20349330, PubMed:9634856). Provides DszA and DszC (DBTO2-monooxygenase and DBT-monooxygenase respectively) with reduced flavin (FMN); has no activity on NADPH or FAD (PubMed:9634856). The pathway substrate specificity has been augmented using mutagenesis, however no mutations allowed use of alkylated thiophenes (PubMed:11823208).</text>
</comment>
<comment type="catalytic activity">
    <reaction evidence="4 5">
        <text>FMNH2 + NAD(+) = FMN + NADH + 2 H(+)</text>
        <dbReference type="Rhea" id="RHEA:21620"/>
        <dbReference type="ChEBI" id="CHEBI:15378"/>
        <dbReference type="ChEBI" id="CHEBI:57540"/>
        <dbReference type="ChEBI" id="CHEBI:57618"/>
        <dbReference type="ChEBI" id="CHEBI:57945"/>
        <dbReference type="ChEBI" id="CHEBI:58210"/>
        <dbReference type="EC" id="1.5.1.42"/>
    </reaction>
</comment>
<comment type="pathway">
    <text evidence="3 5">Sulfur metabolism; dibenzothiophene degradation.</text>
</comment>
<comment type="subcellular location">
    <subcellularLocation>
        <location evidence="7">Cytoplasm</location>
    </subcellularLocation>
</comment>
<comment type="biotechnology">
    <text evidence="3 4">In association with the dszA-dszB-dsz operon can be used to remove sulfur from polycyclic aromatic sulfur compounds found in gasoline and diesel (biodesulfurization), which are a considerable source of pollution. In addition it may be possible to engineer the operon to make specialty chemicals (PubMed:11823208). Can be engineered to make it more active, suggesting it may be possible increase the yield and rate of the biodesulfurization process (PubMed:20349330).</text>
</comment>
<comment type="similarity">
    <text evidence="7">Belongs to the non-flavoprotein flavin reductase family.</text>
</comment>